<protein>
    <recommendedName>
        <fullName>Phage-like element PBSX protein XkdT</fullName>
    </recommendedName>
</protein>
<reference key="1">
    <citation type="submission" date="1996-03" db="EMBL/GenBank/DDBJ databases">
        <authorList>
            <person name="Krogh S."/>
            <person name="O'Reilly M."/>
            <person name="Nolan N."/>
            <person name="Devine K.M."/>
        </authorList>
    </citation>
    <scope>NUCLEOTIDE SEQUENCE [GENOMIC DNA]</scope>
    <source>
        <strain>168</strain>
    </source>
</reference>
<reference key="2">
    <citation type="journal article" date="1997" name="Nature">
        <title>The complete genome sequence of the Gram-positive bacterium Bacillus subtilis.</title>
        <authorList>
            <person name="Kunst F."/>
            <person name="Ogasawara N."/>
            <person name="Moszer I."/>
            <person name="Albertini A.M."/>
            <person name="Alloni G."/>
            <person name="Azevedo V."/>
            <person name="Bertero M.G."/>
            <person name="Bessieres P."/>
            <person name="Bolotin A."/>
            <person name="Borchert S."/>
            <person name="Borriss R."/>
            <person name="Boursier L."/>
            <person name="Brans A."/>
            <person name="Braun M."/>
            <person name="Brignell S.C."/>
            <person name="Bron S."/>
            <person name="Brouillet S."/>
            <person name="Bruschi C.V."/>
            <person name="Caldwell B."/>
            <person name="Capuano V."/>
            <person name="Carter N.M."/>
            <person name="Choi S.-K."/>
            <person name="Codani J.-J."/>
            <person name="Connerton I.F."/>
            <person name="Cummings N.J."/>
            <person name="Daniel R.A."/>
            <person name="Denizot F."/>
            <person name="Devine K.M."/>
            <person name="Duesterhoeft A."/>
            <person name="Ehrlich S.D."/>
            <person name="Emmerson P.T."/>
            <person name="Entian K.-D."/>
            <person name="Errington J."/>
            <person name="Fabret C."/>
            <person name="Ferrari E."/>
            <person name="Foulger D."/>
            <person name="Fritz C."/>
            <person name="Fujita M."/>
            <person name="Fujita Y."/>
            <person name="Fuma S."/>
            <person name="Galizzi A."/>
            <person name="Galleron N."/>
            <person name="Ghim S.-Y."/>
            <person name="Glaser P."/>
            <person name="Goffeau A."/>
            <person name="Golightly E.J."/>
            <person name="Grandi G."/>
            <person name="Guiseppi G."/>
            <person name="Guy B.J."/>
            <person name="Haga K."/>
            <person name="Haiech J."/>
            <person name="Harwood C.R."/>
            <person name="Henaut A."/>
            <person name="Hilbert H."/>
            <person name="Holsappel S."/>
            <person name="Hosono S."/>
            <person name="Hullo M.-F."/>
            <person name="Itaya M."/>
            <person name="Jones L.-M."/>
            <person name="Joris B."/>
            <person name="Karamata D."/>
            <person name="Kasahara Y."/>
            <person name="Klaerr-Blanchard M."/>
            <person name="Klein C."/>
            <person name="Kobayashi Y."/>
            <person name="Koetter P."/>
            <person name="Koningstein G."/>
            <person name="Krogh S."/>
            <person name="Kumano M."/>
            <person name="Kurita K."/>
            <person name="Lapidus A."/>
            <person name="Lardinois S."/>
            <person name="Lauber J."/>
            <person name="Lazarevic V."/>
            <person name="Lee S.-M."/>
            <person name="Levine A."/>
            <person name="Liu H."/>
            <person name="Masuda S."/>
            <person name="Mauel C."/>
            <person name="Medigue C."/>
            <person name="Medina N."/>
            <person name="Mellado R.P."/>
            <person name="Mizuno M."/>
            <person name="Moestl D."/>
            <person name="Nakai S."/>
            <person name="Noback M."/>
            <person name="Noone D."/>
            <person name="O'Reilly M."/>
            <person name="Ogawa K."/>
            <person name="Ogiwara A."/>
            <person name="Oudega B."/>
            <person name="Park S.-H."/>
            <person name="Parro V."/>
            <person name="Pohl T.M."/>
            <person name="Portetelle D."/>
            <person name="Porwollik S."/>
            <person name="Prescott A.M."/>
            <person name="Presecan E."/>
            <person name="Pujic P."/>
            <person name="Purnelle B."/>
            <person name="Rapoport G."/>
            <person name="Rey M."/>
            <person name="Reynolds S."/>
            <person name="Rieger M."/>
            <person name="Rivolta C."/>
            <person name="Rocha E."/>
            <person name="Roche B."/>
            <person name="Rose M."/>
            <person name="Sadaie Y."/>
            <person name="Sato T."/>
            <person name="Scanlan E."/>
            <person name="Schleich S."/>
            <person name="Schroeter R."/>
            <person name="Scoffone F."/>
            <person name="Sekiguchi J."/>
            <person name="Sekowska A."/>
            <person name="Seror S.J."/>
            <person name="Serror P."/>
            <person name="Shin B.-S."/>
            <person name="Soldo B."/>
            <person name="Sorokin A."/>
            <person name="Tacconi E."/>
            <person name="Takagi T."/>
            <person name="Takahashi H."/>
            <person name="Takemaru K."/>
            <person name="Takeuchi M."/>
            <person name="Tamakoshi A."/>
            <person name="Tanaka T."/>
            <person name="Terpstra P."/>
            <person name="Tognoni A."/>
            <person name="Tosato V."/>
            <person name="Uchiyama S."/>
            <person name="Vandenbol M."/>
            <person name="Vannier F."/>
            <person name="Vassarotti A."/>
            <person name="Viari A."/>
            <person name="Wambutt R."/>
            <person name="Wedler E."/>
            <person name="Wedler H."/>
            <person name="Weitzenegger T."/>
            <person name="Winters P."/>
            <person name="Wipat A."/>
            <person name="Yamamoto H."/>
            <person name="Yamane K."/>
            <person name="Yasumoto K."/>
            <person name="Yata K."/>
            <person name="Yoshida K."/>
            <person name="Yoshikawa H.-F."/>
            <person name="Zumstein E."/>
            <person name="Yoshikawa H."/>
            <person name="Danchin A."/>
        </authorList>
    </citation>
    <scope>NUCLEOTIDE SEQUENCE [LARGE SCALE GENOMIC DNA]</scope>
    <source>
        <strain>168</strain>
    </source>
</reference>
<comment type="similarity">
    <text evidence="1">Belongs to the Mu gp47/PBSX XkdT family.</text>
</comment>
<sequence length="348" mass="38368">MFEDQTFEAIMERMLNSISADIDTREGSVIYNALAPAAAELAKSYIWLDTVLELVFSDTAQGEFLDRRAAEAGIERTAATKAVRAGEFTSGVTIPVGSRFYVDNLYFQYTADGTLICETPGEAGNANLTGRNLLSLDTIPGLETAIVKEILIPGREEEGDDSLRERYFTRVRREAVSANKMHYKEWAEEVDGVGKAKIFPLWNGEGTVKIVVTNANLEPASPILIQKVKDYIDPEPGQGEGQAPIGAVVTVESAVWKEVEISAEVLPEINHSIDEVKSEIEEGVLNFFKKMAFEDNVIRLSQINNIVYNSPSVSDYSNIQINGTSENLVLSDVEIPKLGQVKIIEQTR</sequence>
<organism>
    <name type="scientific">Bacillus subtilis (strain 168)</name>
    <dbReference type="NCBI Taxonomy" id="224308"/>
    <lineage>
        <taxon>Bacteria</taxon>
        <taxon>Bacillati</taxon>
        <taxon>Bacillota</taxon>
        <taxon>Bacilli</taxon>
        <taxon>Bacillales</taxon>
        <taxon>Bacillaceae</taxon>
        <taxon>Bacillus</taxon>
    </lineage>
</organism>
<proteinExistence type="inferred from homology"/>
<name>XKDT_BACSU</name>
<dbReference type="EMBL" id="Z70177">
    <property type="protein sequence ID" value="CAA94041.1"/>
    <property type="molecule type" value="Genomic_DNA"/>
</dbReference>
<dbReference type="EMBL" id="AL009126">
    <property type="protein sequence ID" value="CAB13130.1"/>
    <property type="molecule type" value="Genomic_DNA"/>
</dbReference>
<dbReference type="PIR" id="C69733">
    <property type="entry name" value="C69733"/>
</dbReference>
<dbReference type="RefSeq" id="NP_389155.1">
    <property type="nucleotide sequence ID" value="NC_000964.3"/>
</dbReference>
<dbReference type="RefSeq" id="WP_009967060.1">
    <property type="nucleotide sequence ID" value="NZ_OZ025638.1"/>
</dbReference>
<dbReference type="SMR" id="P54339"/>
<dbReference type="FunCoup" id="P54339">
    <property type="interactions" value="37"/>
</dbReference>
<dbReference type="STRING" id="224308.BSU12730"/>
<dbReference type="PaxDb" id="224308-BSU12730"/>
<dbReference type="EnsemblBacteria" id="CAB13130">
    <property type="protein sequence ID" value="CAB13130"/>
    <property type="gene ID" value="BSU_12730"/>
</dbReference>
<dbReference type="GeneID" id="936475"/>
<dbReference type="KEGG" id="bsu:BSU12730"/>
<dbReference type="PATRIC" id="fig|224308.179.peg.1380"/>
<dbReference type="eggNOG" id="COG3299">
    <property type="taxonomic scope" value="Bacteria"/>
</dbReference>
<dbReference type="InParanoid" id="P54339"/>
<dbReference type="OrthoDB" id="2554267at2"/>
<dbReference type="PhylomeDB" id="P54339"/>
<dbReference type="BioCyc" id="BSUB:BSU12730-MONOMER"/>
<dbReference type="Proteomes" id="UP000001570">
    <property type="component" value="Chromosome"/>
</dbReference>
<dbReference type="InterPro" id="IPR006949">
    <property type="entry name" value="Baseplate_J-like"/>
</dbReference>
<dbReference type="InterPro" id="IPR052399">
    <property type="entry name" value="Phage_Baseplate_Assmbl_Protein"/>
</dbReference>
<dbReference type="PANTHER" id="PTHR37829">
    <property type="entry name" value="PHAGE-LIKE ELEMENT PBSX PROTEIN XKDT"/>
    <property type="match status" value="1"/>
</dbReference>
<dbReference type="PANTHER" id="PTHR37829:SF3">
    <property type="entry name" value="PROTEIN JAYE-RELATED"/>
    <property type="match status" value="1"/>
</dbReference>
<dbReference type="Pfam" id="PF04865">
    <property type="entry name" value="Baseplate_J"/>
    <property type="match status" value="1"/>
</dbReference>
<keyword id="KW-1185">Reference proteome</keyword>
<accession>P54339</accession>
<gene>
    <name type="primary">xkdT</name>
    <name type="ordered locus">BSU12730</name>
</gene>
<feature type="chain" id="PRO_0000077845" description="Phage-like element PBSX protein XkdT">
    <location>
        <begin position="1"/>
        <end position="348"/>
    </location>
</feature>
<evidence type="ECO:0000305" key="1"/>